<reference key="1">
    <citation type="journal article" date="1992" name="Mol. Cell. Biol.">
        <title>The RNA polymerase II 15-kilodalton subunit is essential for viability in Drosophila melanogaster.</title>
        <authorList>
            <person name="Harrison D.A."/>
            <person name="Mortin M.A."/>
            <person name="Corces V.G."/>
        </authorList>
    </citation>
    <scope>NUCLEOTIDE SEQUENCE [GENOMIC DNA]</scope>
    <scope>DEVELOPMENTAL STAGE</scope>
</reference>
<reference key="2">
    <citation type="journal article" date="1993" name="FEBS Lett.">
        <title>RPII15 codes for the M(r) 15,000 subunit 9 of Drosophila melanogaster RNA polymerase II.</title>
        <authorList>
            <person name="Liu Z."/>
            <person name="Kontermann R.E."/>
            <person name="Schulze R.A."/>
            <person name="Petersen G."/>
            <person name="Bautz E.K."/>
        </authorList>
    </citation>
    <scope>NUCLEOTIDE SEQUENCE [GENOMIC DNA]</scope>
</reference>
<reference key="3">
    <citation type="journal article" date="2000" name="Science">
        <title>The genome sequence of Drosophila melanogaster.</title>
        <authorList>
            <person name="Adams M.D."/>
            <person name="Celniker S.E."/>
            <person name="Holt R.A."/>
            <person name="Evans C.A."/>
            <person name="Gocayne J.D."/>
            <person name="Amanatides P.G."/>
            <person name="Scherer S.E."/>
            <person name="Li P.W."/>
            <person name="Hoskins R.A."/>
            <person name="Galle R.F."/>
            <person name="George R.A."/>
            <person name="Lewis S.E."/>
            <person name="Richards S."/>
            <person name="Ashburner M."/>
            <person name="Henderson S.N."/>
            <person name="Sutton G.G."/>
            <person name="Wortman J.R."/>
            <person name="Yandell M.D."/>
            <person name="Zhang Q."/>
            <person name="Chen L.X."/>
            <person name="Brandon R.C."/>
            <person name="Rogers Y.-H.C."/>
            <person name="Blazej R.G."/>
            <person name="Champe M."/>
            <person name="Pfeiffer B.D."/>
            <person name="Wan K.H."/>
            <person name="Doyle C."/>
            <person name="Baxter E.G."/>
            <person name="Helt G."/>
            <person name="Nelson C.R."/>
            <person name="Miklos G.L.G."/>
            <person name="Abril J.F."/>
            <person name="Agbayani A."/>
            <person name="An H.-J."/>
            <person name="Andrews-Pfannkoch C."/>
            <person name="Baldwin D."/>
            <person name="Ballew R.M."/>
            <person name="Basu A."/>
            <person name="Baxendale J."/>
            <person name="Bayraktaroglu L."/>
            <person name="Beasley E.M."/>
            <person name="Beeson K.Y."/>
            <person name="Benos P.V."/>
            <person name="Berman B.P."/>
            <person name="Bhandari D."/>
            <person name="Bolshakov S."/>
            <person name="Borkova D."/>
            <person name="Botchan M.R."/>
            <person name="Bouck J."/>
            <person name="Brokstein P."/>
            <person name="Brottier P."/>
            <person name="Burtis K.C."/>
            <person name="Busam D.A."/>
            <person name="Butler H."/>
            <person name="Cadieu E."/>
            <person name="Center A."/>
            <person name="Chandra I."/>
            <person name="Cherry J.M."/>
            <person name="Cawley S."/>
            <person name="Dahlke C."/>
            <person name="Davenport L.B."/>
            <person name="Davies P."/>
            <person name="de Pablos B."/>
            <person name="Delcher A."/>
            <person name="Deng Z."/>
            <person name="Mays A.D."/>
            <person name="Dew I."/>
            <person name="Dietz S.M."/>
            <person name="Dodson K."/>
            <person name="Doup L.E."/>
            <person name="Downes M."/>
            <person name="Dugan-Rocha S."/>
            <person name="Dunkov B.C."/>
            <person name="Dunn P."/>
            <person name="Durbin K.J."/>
            <person name="Evangelista C.C."/>
            <person name="Ferraz C."/>
            <person name="Ferriera S."/>
            <person name="Fleischmann W."/>
            <person name="Fosler C."/>
            <person name="Gabrielian A.E."/>
            <person name="Garg N.S."/>
            <person name="Gelbart W.M."/>
            <person name="Glasser K."/>
            <person name="Glodek A."/>
            <person name="Gong F."/>
            <person name="Gorrell J.H."/>
            <person name="Gu Z."/>
            <person name="Guan P."/>
            <person name="Harris M."/>
            <person name="Harris N.L."/>
            <person name="Harvey D.A."/>
            <person name="Heiman T.J."/>
            <person name="Hernandez J.R."/>
            <person name="Houck J."/>
            <person name="Hostin D."/>
            <person name="Houston K.A."/>
            <person name="Howland T.J."/>
            <person name="Wei M.-H."/>
            <person name="Ibegwam C."/>
            <person name="Jalali M."/>
            <person name="Kalush F."/>
            <person name="Karpen G.H."/>
            <person name="Ke Z."/>
            <person name="Kennison J.A."/>
            <person name="Ketchum K.A."/>
            <person name="Kimmel B.E."/>
            <person name="Kodira C.D."/>
            <person name="Kraft C.L."/>
            <person name="Kravitz S."/>
            <person name="Kulp D."/>
            <person name="Lai Z."/>
            <person name="Lasko P."/>
            <person name="Lei Y."/>
            <person name="Levitsky A.A."/>
            <person name="Li J.H."/>
            <person name="Li Z."/>
            <person name="Liang Y."/>
            <person name="Lin X."/>
            <person name="Liu X."/>
            <person name="Mattei B."/>
            <person name="McIntosh T.C."/>
            <person name="McLeod M.P."/>
            <person name="McPherson D."/>
            <person name="Merkulov G."/>
            <person name="Milshina N.V."/>
            <person name="Mobarry C."/>
            <person name="Morris J."/>
            <person name="Moshrefi A."/>
            <person name="Mount S.M."/>
            <person name="Moy M."/>
            <person name="Murphy B."/>
            <person name="Murphy L."/>
            <person name="Muzny D.M."/>
            <person name="Nelson D.L."/>
            <person name="Nelson D.R."/>
            <person name="Nelson K.A."/>
            <person name="Nixon K."/>
            <person name="Nusskern D.R."/>
            <person name="Pacleb J.M."/>
            <person name="Palazzolo M."/>
            <person name="Pittman G.S."/>
            <person name="Pan S."/>
            <person name="Pollard J."/>
            <person name="Puri V."/>
            <person name="Reese M.G."/>
            <person name="Reinert K."/>
            <person name="Remington K."/>
            <person name="Saunders R.D.C."/>
            <person name="Scheeler F."/>
            <person name="Shen H."/>
            <person name="Shue B.C."/>
            <person name="Siden-Kiamos I."/>
            <person name="Simpson M."/>
            <person name="Skupski M.P."/>
            <person name="Smith T.J."/>
            <person name="Spier E."/>
            <person name="Spradling A.C."/>
            <person name="Stapleton M."/>
            <person name="Strong R."/>
            <person name="Sun E."/>
            <person name="Svirskas R."/>
            <person name="Tector C."/>
            <person name="Turner R."/>
            <person name="Venter E."/>
            <person name="Wang A.H."/>
            <person name="Wang X."/>
            <person name="Wang Z.-Y."/>
            <person name="Wassarman D.A."/>
            <person name="Weinstock G.M."/>
            <person name="Weissenbach J."/>
            <person name="Williams S.M."/>
            <person name="Woodage T."/>
            <person name="Worley K.C."/>
            <person name="Wu D."/>
            <person name="Yang S."/>
            <person name="Yao Q.A."/>
            <person name="Ye J."/>
            <person name="Yeh R.-F."/>
            <person name="Zaveri J.S."/>
            <person name="Zhan M."/>
            <person name="Zhang G."/>
            <person name="Zhao Q."/>
            <person name="Zheng L."/>
            <person name="Zheng X.H."/>
            <person name="Zhong F.N."/>
            <person name="Zhong W."/>
            <person name="Zhou X."/>
            <person name="Zhu S.C."/>
            <person name="Zhu X."/>
            <person name="Smith H.O."/>
            <person name="Gibbs R.A."/>
            <person name="Myers E.W."/>
            <person name="Rubin G.M."/>
            <person name="Venter J.C."/>
        </authorList>
    </citation>
    <scope>NUCLEOTIDE SEQUENCE [LARGE SCALE GENOMIC DNA]</scope>
    <source>
        <strain>Berkeley</strain>
    </source>
</reference>
<reference key="4">
    <citation type="journal article" date="2002" name="Genome Biol.">
        <title>Annotation of the Drosophila melanogaster euchromatic genome: a systematic review.</title>
        <authorList>
            <person name="Misra S."/>
            <person name="Crosby M.A."/>
            <person name="Mungall C.J."/>
            <person name="Matthews B.B."/>
            <person name="Campbell K.S."/>
            <person name="Hradecky P."/>
            <person name="Huang Y."/>
            <person name="Kaminker J.S."/>
            <person name="Millburn G.H."/>
            <person name="Prochnik S.E."/>
            <person name="Smith C.D."/>
            <person name="Tupy J.L."/>
            <person name="Whitfield E.J."/>
            <person name="Bayraktaroglu L."/>
            <person name="Berman B.P."/>
            <person name="Bettencourt B.R."/>
            <person name="Celniker S.E."/>
            <person name="de Grey A.D.N.J."/>
            <person name="Drysdale R.A."/>
            <person name="Harris N.L."/>
            <person name="Richter J."/>
            <person name="Russo S."/>
            <person name="Schroeder A.J."/>
            <person name="Shu S.Q."/>
            <person name="Stapleton M."/>
            <person name="Yamada C."/>
            <person name="Ashburner M."/>
            <person name="Gelbart W.M."/>
            <person name="Rubin G.M."/>
            <person name="Lewis S.E."/>
        </authorList>
    </citation>
    <scope>GENOME REANNOTATION</scope>
    <source>
        <strain>Berkeley</strain>
    </source>
</reference>
<evidence type="ECO:0000250" key="1"/>
<evidence type="ECO:0000250" key="2">
    <source>
        <dbReference type="UniProtKB" id="P32529"/>
    </source>
</evidence>
<evidence type="ECO:0000255" key="3"/>
<evidence type="ECO:0000255" key="4">
    <source>
        <dbReference type="PROSITE-ProRule" id="PRU00472"/>
    </source>
</evidence>
<evidence type="ECO:0000255" key="5">
    <source>
        <dbReference type="PROSITE-ProRule" id="PRU10145"/>
    </source>
</evidence>
<evidence type="ECO:0000269" key="6">
    <source>
    </source>
</evidence>
<evidence type="ECO:0000303" key="7">
    <source>
    </source>
</evidence>
<evidence type="ECO:0000305" key="8"/>
<evidence type="ECO:0000312" key="9">
    <source>
        <dbReference type="FlyBase" id="FBgn0004855"/>
    </source>
</evidence>
<dbReference type="EMBL" id="S88139">
    <property type="protein sequence ID" value="AAB21674.1"/>
    <property type="molecule type" value="Genomic_DNA"/>
</dbReference>
<dbReference type="EMBL" id="S66940">
    <property type="protein sequence ID" value="AAB29028.2"/>
    <property type="molecule type" value="Genomic_DNA"/>
</dbReference>
<dbReference type="EMBL" id="AE014297">
    <property type="protein sequence ID" value="AAF55045.1"/>
    <property type="molecule type" value="Genomic_DNA"/>
</dbReference>
<dbReference type="PIR" id="S39445">
    <property type="entry name" value="S39445"/>
</dbReference>
<dbReference type="RefSeq" id="NP_001247099.1">
    <property type="nucleotide sequence ID" value="NM_001260170.2"/>
</dbReference>
<dbReference type="RefSeq" id="NP_001287326.1">
    <property type="nucleotide sequence ID" value="NM_001300397.1"/>
</dbReference>
<dbReference type="RefSeq" id="NP_731898.1">
    <property type="nucleotide sequence ID" value="NM_169575.3"/>
</dbReference>
<dbReference type="PDB" id="9MU9">
    <property type="method" value="EM"/>
    <property type="resolution" value="7.80 A"/>
    <property type="chains" value="I=14-129"/>
</dbReference>
<dbReference type="PDBsum" id="9MU9"/>
<dbReference type="EMDB" id="EMD-48626"/>
<dbReference type="SMR" id="P36958"/>
<dbReference type="ComplexPortal" id="CPX-2625">
    <property type="entry name" value="DNA-directed RNA polymerase II complex"/>
</dbReference>
<dbReference type="FunCoup" id="P36958">
    <property type="interactions" value="1016"/>
</dbReference>
<dbReference type="IntAct" id="P36958">
    <property type="interactions" value="4"/>
</dbReference>
<dbReference type="STRING" id="7227.FBpp0312065"/>
<dbReference type="PaxDb" id="7227-FBpp0082384"/>
<dbReference type="DNASU" id="41741"/>
<dbReference type="EnsemblMetazoa" id="FBtr0082925">
    <property type="protein sequence ID" value="FBpp0082384"/>
    <property type="gene ID" value="FBgn0004855"/>
</dbReference>
<dbReference type="EnsemblMetazoa" id="FBtr0309995">
    <property type="protein sequence ID" value="FBpp0301701"/>
    <property type="gene ID" value="FBgn0004855"/>
</dbReference>
<dbReference type="EnsemblMetazoa" id="FBtr0346348">
    <property type="protein sequence ID" value="FBpp0312065"/>
    <property type="gene ID" value="FBgn0004855"/>
</dbReference>
<dbReference type="GeneID" id="41741"/>
<dbReference type="KEGG" id="dme:Dmel_CG3284"/>
<dbReference type="AGR" id="FB:FBgn0004855"/>
<dbReference type="CTD" id="5438"/>
<dbReference type="FlyBase" id="FBgn0004855">
    <property type="gene designation" value="Polr2I"/>
</dbReference>
<dbReference type="VEuPathDB" id="VectorBase:FBgn0004855"/>
<dbReference type="eggNOG" id="KOG2691">
    <property type="taxonomic scope" value="Eukaryota"/>
</dbReference>
<dbReference type="GeneTree" id="ENSGT00550000075063"/>
<dbReference type="HOGENOM" id="CLU_093932_0_1_1"/>
<dbReference type="InParanoid" id="P36958"/>
<dbReference type="OMA" id="DTSMVLF"/>
<dbReference type="OrthoDB" id="282270at2759"/>
<dbReference type="PhylomeDB" id="P36958"/>
<dbReference type="Reactome" id="R-DME-112382">
    <property type="pathway name" value="Formation of RNA Pol II elongation complex"/>
</dbReference>
<dbReference type="Reactome" id="R-DME-113418">
    <property type="pathway name" value="Formation of the Early Elongation Complex"/>
</dbReference>
<dbReference type="Reactome" id="R-DME-5578749">
    <property type="pathway name" value="Transcriptional regulation by small RNAs"/>
</dbReference>
<dbReference type="Reactome" id="R-DME-674695">
    <property type="pathway name" value="RNA Polymerase II Pre-transcription Events"/>
</dbReference>
<dbReference type="Reactome" id="R-DME-6781823">
    <property type="pathway name" value="Formation of TC-NER Pre-Incision Complex"/>
</dbReference>
<dbReference type="Reactome" id="R-DME-6782135">
    <property type="pathway name" value="Dual incision in TC-NER"/>
</dbReference>
<dbReference type="Reactome" id="R-DME-6782210">
    <property type="pathway name" value="Gap-filling DNA repair synthesis and ligation in TC-NER"/>
</dbReference>
<dbReference type="Reactome" id="R-DME-6796648">
    <property type="pathway name" value="TP53 Regulates Transcription of DNA Repair Genes"/>
</dbReference>
<dbReference type="Reactome" id="R-DME-6807505">
    <property type="pathway name" value="RNA polymerase II transcribes snRNA genes"/>
</dbReference>
<dbReference type="Reactome" id="R-DME-72086">
    <property type="pathway name" value="mRNA Capping"/>
</dbReference>
<dbReference type="Reactome" id="R-DME-72163">
    <property type="pathway name" value="mRNA Splicing - Major Pathway"/>
</dbReference>
<dbReference type="Reactome" id="R-DME-72165">
    <property type="pathway name" value="mRNA Splicing - Minor Pathway"/>
</dbReference>
<dbReference type="Reactome" id="R-DME-72203">
    <property type="pathway name" value="Processing of Capped Intron-Containing Pre-mRNA"/>
</dbReference>
<dbReference type="Reactome" id="R-DME-73776">
    <property type="pathway name" value="RNA Polymerase II Promoter Escape"/>
</dbReference>
<dbReference type="Reactome" id="R-DME-73779">
    <property type="pathway name" value="RNA Polymerase II Transcription Pre-Initiation And Promoter Opening"/>
</dbReference>
<dbReference type="Reactome" id="R-DME-75953">
    <property type="pathway name" value="RNA Polymerase II Transcription Initiation"/>
</dbReference>
<dbReference type="Reactome" id="R-DME-75955">
    <property type="pathway name" value="RNA Polymerase II Transcription Elongation"/>
</dbReference>
<dbReference type="Reactome" id="R-DME-76042">
    <property type="pathway name" value="RNA Polymerase II Transcription Initiation And Promoter Clearance"/>
</dbReference>
<dbReference type="Reactome" id="R-DME-77075">
    <property type="pathway name" value="RNA Pol II CTD phosphorylation and interaction with CE"/>
</dbReference>
<dbReference type="Reactome" id="R-DME-9018519">
    <property type="pathway name" value="Estrogen-dependent gene expression"/>
</dbReference>
<dbReference type="SignaLink" id="P36958"/>
<dbReference type="BioGRID-ORCS" id="41741">
    <property type="hits" value="0 hits in 1 CRISPR screen"/>
</dbReference>
<dbReference type="GenomeRNAi" id="41741"/>
<dbReference type="PRO" id="PR:P36958"/>
<dbReference type="Proteomes" id="UP000000803">
    <property type="component" value="Chromosome 3R"/>
</dbReference>
<dbReference type="Bgee" id="FBgn0004855">
    <property type="expression patterns" value="Expressed in egg cell and 136 other cell types or tissues"/>
</dbReference>
<dbReference type="ExpressionAtlas" id="P36958">
    <property type="expression patterns" value="baseline and differential"/>
</dbReference>
<dbReference type="GO" id="GO:0005730">
    <property type="term" value="C:nucleolus"/>
    <property type="evidence" value="ECO:0007669"/>
    <property type="project" value="UniProtKB-SubCell"/>
</dbReference>
<dbReference type="GO" id="GO:0005634">
    <property type="term" value="C:nucleus"/>
    <property type="evidence" value="ECO:0000314"/>
    <property type="project" value="FlyBase"/>
</dbReference>
<dbReference type="GO" id="GO:0005665">
    <property type="term" value="C:RNA polymerase II, core complex"/>
    <property type="evidence" value="ECO:0000314"/>
    <property type="project" value="FlyBase"/>
</dbReference>
<dbReference type="GO" id="GO:0003899">
    <property type="term" value="F:DNA-directed RNA polymerase activity"/>
    <property type="evidence" value="ECO:0007669"/>
    <property type="project" value="InterPro"/>
</dbReference>
<dbReference type="GO" id="GO:0003676">
    <property type="term" value="F:nucleic acid binding"/>
    <property type="evidence" value="ECO:0007669"/>
    <property type="project" value="InterPro"/>
</dbReference>
<dbReference type="GO" id="GO:0008270">
    <property type="term" value="F:zinc ion binding"/>
    <property type="evidence" value="ECO:0007669"/>
    <property type="project" value="UniProtKB-KW"/>
</dbReference>
<dbReference type="GO" id="GO:0001193">
    <property type="term" value="P:maintenance of transcriptional fidelity during transcription elongation by RNA polymerase II"/>
    <property type="evidence" value="ECO:0000318"/>
    <property type="project" value="GO_Central"/>
</dbReference>
<dbReference type="GO" id="GO:0000278">
    <property type="term" value="P:mitotic cell cycle"/>
    <property type="evidence" value="ECO:0007001"/>
    <property type="project" value="FlyBase"/>
</dbReference>
<dbReference type="GO" id="GO:0006366">
    <property type="term" value="P:transcription by RNA polymerase II"/>
    <property type="evidence" value="ECO:0000250"/>
    <property type="project" value="FlyBase"/>
</dbReference>
<dbReference type="GO" id="GO:0006367">
    <property type="term" value="P:transcription initiation at RNA polymerase II promoter"/>
    <property type="evidence" value="ECO:0000318"/>
    <property type="project" value="GO_Central"/>
</dbReference>
<dbReference type="GO" id="GO:0006283">
    <property type="term" value="P:transcription-coupled nucleotide-excision repair"/>
    <property type="evidence" value="ECO:0000318"/>
    <property type="project" value="GO_Central"/>
</dbReference>
<dbReference type="CDD" id="cd10508">
    <property type="entry name" value="Zn-ribbon_RPB9"/>
    <property type="match status" value="1"/>
</dbReference>
<dbReference type="FunFam" id="2.20.25.10:FF:000004">
    <property type="entry name" value="DNA-directed RNA polymerase subunit"/>
    <property type="match status" value="1"/>
</dbReference>
<dbReference type="FunFam" id="2.20.25.10:FF:000009">
    <property type="entry name" value="DNA-directed RNA polymerase subunit"/>
    <property type="match status" value="1"/>
</dbReference>
<dbReference type="Gene3D" id="2.20.25.10">
    <property type="match status" value="2"/>
</dbReference>
<dbReference type="InterPro" id="IPR019761">
    <property type="entry name" value="DNA-dir_RNA_pol-M_15_CS"/>
</dbReference>
<dbReference type="InterPro" id="IPR012164">
    <property type="entry name" value="Rpa12/Rpb9/Rpc10/TFS"/>
</dbReference>
<dbReference type="InterPro" id="IPR001529">
    <property type="entry name" value="Zn_ribbon_RPB9"/>
</dbReference>
<dbReference type="InterPro" id="IPR034012">
    <property type="entry name" value="Zn_ribbon_RPB9_C"/>
</dbReference>
<dbReference type="InterPro" id="IPR001222">
    <property type="entry name" value="Znf_TFIIS"/>
</dbReference>
<dbReference type="PANTHER" id="PTHR11239">
    <property type="entry name" value="DNA-DIRECTED RNA POLYMERASE"/>
    <property type="match status" value="1"/>
</dbReference>
<dbReference type="PANTHER" id="PTHR11239:SF1">
    <property type="entry name" value="DNA-DIRECTED RNA POLYMERASE II SUBUNIT RPB9"/>
    <property type="match status" value="1"/>
</dbReference>
<dbReference type="Pfam" id="PF02150">
    <property type="entry name" value="Zn_ribbon_RPB9"/>
    <property type="match status" value="1"/>
</dbReference>
<dbReference type="Pfam" id="PF01096">
    <property type="entry name" value="Zn_ribbon_TFIIS"/>
    <property type="match status" value="1"/>
</dbReference>
<dbReference type="PIRSF" id="PIRSF005586">
    <property type="entry name" value="RNApol_RpoM"/>
    <property type="match status" value="1"/>
</dbReference>
<dbReference type="SMART" id="SM00661">
    <property type="entry name" value="RPOL9"/>
    <property type="match status" value="1"/>
</dbReference>
<dbReference type="SMART" id="SM00440">
    <property type="entry name" value="ZnF_C2C2"/>
    <property type="match status" value="1"/>
</dbReference>
<dbReference type="SUPFAM" id="SSF57783">
    <property type="entry name" value="Zinc beta-ribbon"/>
    <property type="match status" value="2"/>
</dbReference>
<dbReference type="PROSITE" id="PS01030">
    <property type="entry name" value="RNA_POL_M_15KD"/>
    <property type="match status" value="1"/>
</dbReference>
<dbReference type="PROSITE" id="PS00466">
    <property type="entry name" value="ZF_TFIIS_1"/>
    <property type="match status" value="1"/>
</dbReference>
<dbReference type="PROSITE" id="PS51133">
    <property type="entry name" value="ZF_TFIIS_2"/>
    <property type="match status" value="1"/>
</dbReference>
<proteinExistence type="evidence at protein level"/>
<keyword id="KW-0002">3D-structure</keyword>
<keyword id="KW-0240">DNA-directed RNA polymerase</keyword>
<keyword id="KW-0479">Metal-binding</keyword>
<keyword id="KW-0539">Nucleus</keyword>
<keyword id="KW-1185">Reference proteome</keyword>
<keyword id="KW-0804">Transcription</keyword>
<keyword id="KW-0862">Zinc</keyword>
<keyword id="KW-0863">Zinc-finger</keyword>
<sequence length="129" mass="15098">MTTAFDAAHTEGPGFVGIRFCQECNNMLYPKEDKENKILLYACRNCDYKQEADSNCIYVNKIMHEIDELTHIVPDVISDPTLPRTEDHACPKCSHREAVFFQAQTRRAEEEMRLYYVCTNQNCTHRWTE</sequence>
<comment type="function">
    <text evidence="1">DNA-dependent RNA polymerase catalyzes the transcription of DNA into RNA using the four ribonucleoside triphosphates as substrates. Component of RNA polymerase II which synthesizes mRNA precursors and many functional non-coding RNAs. Pol II is the central component of the basal RNA polymerase II transcription machinery. It is composed of mobile elements that move relative to each other. RPB9 is part of the upper jaw surrounding the central large cleft and thought to grab the incoming DNA template (By similarity).</text>
</comment>
<comment type="subunit">
    <text evidence="1">Component of the RNA polymerase II (Pol II) complex consisting of 12 subunits.</text>
</comment>
<comment type="subcellular location">
    <subcellularLocation>
        <location evidence="2">Nucleus</location>
        <location evidence="2">Nucleolus</location>
    </subcellularLocation>
</comment>
<comment type="developmental stage">
    <text evidence="6">Expressed both maternally and zygotically throughout development.</text>
</comment>
<comment type="similarity">
    <text evidence="8">Belongs to the archaeal RpoM/eukaryotic RPA12/RPB9/RPC11 RNA polymerase family.</text>
</comment>
<gene>
    <name evidence="9" type="primary">Polr2I</name>
    <name evidence="7" type="synonym">RpII15</name>
    <name evidence="9" type="ORF">CG3284</name>
</gene>
<feature type="chain" id="PRO_0000121470" description="DNA-directed RNA polymerase II subunit RPB9">
    <location>
        <begin position="1"/>
        <end position="129"/>
    </location>
</feature>
<feature type="zinc finger region" description="C4-type" evidence="3">
    <location>
        <begin position="21"/>
        <end position="46"/>
    </location>
</feature>
<feature type="zinc finger region" description="TFIIS-type" evidence="4">
    <location>
        <begin position="86"/>
        <end position="128"/>
    </location>
</feature>
<feature type="binding site" evidence="5">
    <location>
        <position position="21"/>
    </location>
    <ligand>
        <name>Zn(2+)</name>
        <dbReference type="ChEBI" id="CHEBI:29105"/>
        <label>1</label>
    </ligand>
</feature>
<feature type="binding site" evidence="5">
    <location>
        <position position="24"/>
    </location>
    <ligand>
        <name>Zn(2+)</name>
        <dbReference type="ChEBI" id="CHEBI:29105"/>
        <label>1</label>
    </ligand>
</feature>
<feature type="binding site" evidence="5">
    <location>
        <position position="43"/>
    </location>
    <ligand>
        <name>Zn(2+)</name>
        <dbReference type="ChEBI" id="CHEBI:29105"/>
        <label>1</label>
    </ligand>
</feature>
<feature type="binding site" evidence="5">
    <location>
        <position position="46"/>
    </location>
    <ligand>
        <name>Zn(2+)</name>
        <dbReference type="ChEBI" id="CHEBI:29105"/>
        <label>1</label>
    </ligand>
</feature>
<feature type="binding site" evidence="4">
    <location>
        <position position="90"/>
    </location>
    <ligand>
        <name>Zn(2+)</name>
        <dbReference type="ChEBI" id="CHEBI:29105"/>
        <label>2</label>
    </ligand>
</feature>
<feature type="binding site" evidence="4">
    <location>
        <position position="93"/>
    </location>
    <ligand>
        <name>Zn(2+)</name>
        <dbReference type="ChEBI" id="CHEBI:29105"/>
        <label>2</label>
    </ligand>
</feature>
<feature type="binding site" evidence="4">
    <location>
        <position position="118"/>
    </location>
    <ligand>
        <name>Zn(2+)</name>
        <dbReference type="ChEBI" id="CHEBI:29105"/>
        <label>2</label>
    </ligand>
</feature>
<feature type="binding site" evidence="4">
    <location>
        <position position="123"/>
    </location>
    <ligand>
        <name>Zn(2+)</name>
        <dbReference type="ChEBI" id="CHEBI:29105"/>
        <label>2</label>
    </ligand>
</feature>
<feature type="sequence conflict" description="In Ref. 1; AAB21674." evidence="8" ref="1">
    <original>EAD</original>
    <variation>KTN</variation>
    <location>
        <begin position="51"/>
        <end position="53"/>
    </location>
</feature>
<feature type="sequence conflict" description="In Ref. 2; AAB29028." evidence="8" ref="2">
    <original>F</original>
    <variation>S</variation>
    <location>
        <position position="100"/>
    </location>
</feature>
<feature type="sequence conflict" description="In Ref. 1; AAB21674." evidence="8" ref="1">
    <original>Q</original>
    <variation>K</variation>
    <location>
        <position position="102"/>
    </location>
</feature>
<organism>
    <name type="scientific">Drosophila melanogaster</name>
    <name type="common">Fruit fly</name>
    <dbReference type="NCBI Taxonomy" id="7227"/>
    <lineage>
        <taxon>Eukaryota</taxon>
        <taxon>Metazoa</taxon>
        <taxon>Ecdysozoa</taxon>
        <taxon>Arthropoda</taxon>
        <taxon>Hexapoda</taxon>
        <taxon>Insecta</taxon>
        <taxon>Pterygota</taxon>
        <taxon>Neoptera</taxon>
        <taxon>Endopterygota</taxon>
        <taxon>Diptera</taxon>
        <taxon>Brachycera</taxon>
        <taxon>Muscomorpha</taxon>
        <taxon>Ephydroidea</taxon>
        <taxon>Drosophilidae</taxon>
        <taxon>Drosophila</taxon>
        <taxon>Sophophora</taxon>
    </lineage>
</organism>
<protein>
    <recommendedName>
        <fullName>DNA-directed RNA polymerase II subunit RPB9</fullName>
        <shortName>RNA polymerase II subunit B9</shortName>
    </recommendedName>
    <alternativeName>
        <fullName evidence="7">DNA-directed RNA polymerase II 15.1 kDa polypeptide</fullName>
    </alternativeName>
    <alternativeName>
        <fullName evidence="9">RNA polymerase II subunit I</fullName>
    </alternativeName>
</protein>
<accession>P36958</accession>
<accession>Q9VFK8</accession>
<name>RPB9_DROME</name>